<name>TAP1_SOYBN</name>
<protein>
    <recommendedName>
        <fullName evidence="4">Histone acetyltransferase TAP1</fullName>
        <shortName evidence="3">GmTAP1</shortName>
        <ecNumber evidence="2">2.3.1.48</ecNumber>
    </recommendedName>
</protein>
<sequence>MSMLSLLRSQLFNFMPIIHCLLKLNSTRKFKSFQLKAGFWESIKSGLMKNNSMQVIDPPSTDEENVEPLSQDFVLVEKTEPDGTIEQIIFSSGGDVDVYDLQALCDKVGWPRRPLSKLAAALKNSYIVASLHSIRKSHGSEGNEQKRLIGMARATSDHAFNATIWDVLVDPGYQGQGLGKALIEKLIRTLLQRDIGNITLFADSQVVEFYRNLGFEADPEGIKGMFWYPNH</sequence>
<reference key="1">
    <citation type="journal article" date="2010" name="Nature">
        <title>Genome sequence of the palaeopolyploid soybean.</title>
        <authorList>
            <person name="Schmutz J."/>
            <person name="Cannon S.B."/>
            <person name="Schlueter J."/>
            <person name="Ma J."/>
            <person name="Mitros T."/>
            <person name="Nelson W."/>
            <person name="Hyten D.L."/>
            <person name="Song Q."/>
            <person name="Thelen J.J."/>
            <person name="Cheng J."/>
            <person name="Xu D."/>
            <person name="Hellsten U."/>
            <person name="May G.D."/>
            <person name="Yu Y."/>
            <person name="Sakurai T."/>
            <person name="Umezawa T."/>
            <person name="Bhattacharyya M.K."/>
            <person name="Sandhu D."/>
            <person name="Valliyodan B."/>
            <person name="Lindquist E."/>
            <person name="Peto M."/>
            <person name="Grant D."/>
            <person name="Shu S."/>
            <person name="Goodstein D."/>
            <person name="Barry K."/>
            <person name="Futrell-Griggs M."/>
            <person name="Abernathy B."/>
            <person name="Du J."/>
            <person name="Tian Z."/>
            <person name="Zhu L."/>
            <person name="Gill N."/>
            <person name="Joshi T."/>
            <person name="Libault M."/>
            <person name="Sethuraman A."/>
            <person name="Zhang X.-C."/>
            <person name="Shinozaki K."/>
            <person name="Nguyen H.T."/>
            <person name="Wing R.A."/>
            <person name="Cregan P."/>
            <person name="Specht J."/>
            <person name="Grimwood J."/>
            <person name="Rokhsar D."/>
            <person name="Stacey G."/>
            <person name="Shoemaker R.C."/>
            <person name="Jackson S.A."/>
        </authorList>
    </citation>
    <scope>NUCLEOTIDE SEQUENCE [LARGE SCALE GENOMIC DNA]</scope>
    <source>
        <strain>cv. Williams 82</strain>
    </source>
</reference>
<reference key="2">
    <citation type="journal article" date="2018" name="Elife">
        <title>A Phytophthora effector recruits a host cytoplasmic transacetylase into nuclear speckles to enhance plant susceptibility.</title>
        <authorList>
            <person name="Li H."/>
            <person name="Wang H."/>
            <person name="Jing M."/>
            <person name="Zhu J."/>
            <person name="Guo B."/>
            <person name="Wang Y."/>
            <person name="Lin Y."/>
            <person name="Chen H."/>
            <person name="Kong L."/>
            <person name="Ma Z."/>
            <person name="Wang Y."/>
            <person name="Ye W."/>
            <person name="Dong S."/>
            <person name="Tyler B."/>
            <person name="Wang Y."/>
        </authorList>
    </citation>
    <scope>FUNCTION</scope>
    <scope>CATALYTIC ACTIVITY</scope>
    <scope>INTERACTION WITH PHYTOPHTORA SOJAE AVH52</scope>
    <scope>SUBCELLULAR LOCATION</scope>
</reference>
<keyword id="KW-0012">Acyltransferase</keyword>
<keyword id="KW-0963">Cytoplasm</keyword>
<keyword id="KW-0539">Nucleus</keyword>
<keyword id="KW-0611">Plant defense</keyword>
<keyword id="KW-1185">Reference proteome</keyword>
<keyword id="KW-0808">Transferase</keyword>
<dbReference type="EC" id="2.3.1.48" evidence="2"/>
<dbReference type="EMBL" id="CM000851">
    <property type="protein sequence ID" value="KRH00502.1"/>
    <property type="molecule type" value="Genomic_DNA"/>
</dbReference>
<dbReference type="RefSeq" id="XP_003551622.2">
    <property type="nucleotide sequence ID" value="XM_003551574.5"/>
</dbReference>
<dbReference type="SMR" id="K7MTW9"/>
<dbReference type="FunCoup" id="K7MTW9">
    <property type="interactions" value="2165"/>
</dbReference>
<dbReference type="STRING" id="3847.K7MTW9"/>
<dbReference type="PaxDb" id="3847-GLYMA18G44940.2"/>
<dbReference type="EnsemblPlants" id="KRH00502">
    <property type="protein sequence ID" value="KRH00502"/>
    <property type="gene ID" value="GLYMA_18G216900"/>
</dbReference>
<dbReference type="GeneID" id="100799333"/>
<dbReference type="Gramene" id="KRH00502">
    <property type="protein sequence ID" value="KRH00502"/>
    <property type="gene ID" value="GLYMA_18G216900"/>
</dbReference>
<dbReference type="eggNOG" id="ENOG502QSCQ">
    <property type="taxonomic scope" value="Eukaryota"/>
</dbReference>
<dbReference type="InParanoid" id="K7MTW9"/>
<dbReference type="OrthoDB" id="10039976at2759"/>
<dbReference type="Proteomes" id="UP000008827">
    <property type="component" value="Chromosome 18"/>
</dbReference>
<dbReference type="ExpressionAtlas" id="K7MTW9">
    <property type="expression patterns" value="baseline and differential"/>
</dbReference>
<dbReference type="GO" id="GO:0005737">
    <property type="term" value="C:cytoplasm"/>
    <property type="evidence" value="ECO:0000314"/>
    <property type="project" value="UniProtKB"/>
</dbReference>
<dbReference type="GO" id="GO:0005634">
    <property type="term" value="C:nucleus"/>
    <property type="evidence" value="ECO:0000314"/>
    <property type="project" value="UniProtKB"/>
</dbReference>
<dbReference type="GO" id="GO:0043998">
    <property type="term" value="F:histone H2A acetyltransferase activity"/>
    <property type="evidence" value="ECO:0000314"/>
    <property type="project" value="UniProtKB"/>
</dbReference>
<dbReference type="GO" id="GO:0010484">
    <property type="term" value="F:histone H3 acetyltransferase activity"/>
    <property type="evidence" value="ECO:0000314"/>
    <property type="project" value="UniProtKB"/>
</dbReference>
<dbReference type="GO" id="GO:0008080">
    <property type="term" value="F:N-acetyltransferase activity"/>
    <property type="evidence" value="ECO:0000318"/>
    <property type="project" value="GO_Central"/>
</dbReference>
<dbReference type="GO" id="GO:0006952">
    <property type="term" value="P:defense response"/>
    <property type="evidence" value="ECO:0007669"/>
    <property type="project" value="UniProtKB-KW"/>
</dbReference>
<dbReference type="CDD" id="cd04301">
    <property type="entry name" value="NAT_SF"/>
    <property type="match status" value="1"/>
</dbReference>
<dbReference type="FunFam" id="3.40.630.30:FF:000059">
    <property type="entry name" value="Putative acetyltransferase NSI"/>
    <property type="match status" value="1"/>
</dbReference>
<dbReference type="Gene3D" id="3.40.630.30">
    <property type="match status" value="1"/>
</dbReference>
<dbReference type="InterPro" id="IPR016181">
    <property type="entry name" value="Acyl_CoA_acyltransferase"/>
</dbReference>
<dbReference type="InterPro" id="IPR000182">
    <property type="entry name" value="GNAT_dom"/>
</dbReference>
<dbReference type="InterPro" id="IPR045039">
    <property type="entry name" value="NSI-like"/>
</dbReference>
<dbReference type="PANTHER" id="PTHR43626">
    <property type="entry name" value="ACYL-COA N-ACYLTRANSFERASE"/>
    <property type="match status" value="1"/>
</dbReference>
<dbReference type="PANTHER" id="PTHR43626:SF4">
    <property type="entry name" value="GCN5-RELATED N-ACETYLTRANSFERASE 2, CHLOROPLASTIC"/>
    <property type="match status" value="1"/>
</dbReference>
<dbReference type="Pfam" id="PF00583">
    <property type="entry name" value="Acetyltransf_1"/>
    <property type="match status" value="1"/>
</dbReference>
<dbReference type="SUPFAM" id="SSF55729">
    <property type="entry name" value="Acyl-CoA N-acyltransferases (Nat)"/>
    <property type="match status" value="1"/>
</dbReference>
<dbReference type="PROSITE" id="PS51186">
    <property type="entry name" value="GNAT"/>
    <property type="match status" value="1"/>
</dbReference>
<feature type="chain" id="PRO_0000446672" description="Histone acetyltransferase TAP1">
    <location>
        <begin position="1"/>
        <end position="231"/>
    </location>
</feature>
<feature type="domain" description="N-acetyltransferase" evidence="1">
    <location>
        <begin position="88"/>
        <end position="231"/>
    </location>
</feature>
<proteinExistence type="evidence at protein level"/>
<accession>K7MTW9</accession>
<organism>
    <name type="scientific">Glycine max</name>
    <name type="common">Soybean</name>
    <name type="synonym">Glycine hispida</name>
    <dbReference type="NCBI Taxonomy" id="3847"/>
    <lineage>
        <taxon>Eukaryota</taxon>
        <taxon>Viridiplantae</taxon>
        <taxon>Streptophyta</taxon>
        <taxon>Embryophyta</taxon>
        <taxon>Tracheophyta</taxon>
        <taxon>Spermatophyta</taxon>
        <taxon>Magnoliopsida</taxon>
        <taxon>eudicotyledons</taxon>
        <taxon>Gunneridae</taxon>
        <taxon>Pentapetalae</taxon>
        <taxon>rosids</taxon>
        <taxon>fabids</taxon>
        <taxon>Fabales</taxon>
        <taxon>Fabaceae</taxon>
        <taxon>Papilionoideae</taxon>
        <taxon>50 kb inversion clade</taxon>
        <taxon>NPAAA clade</taxon>
        <taxon>indigoferoid/millettioid clade</taxon>
        <taxon>Phaseoleae</taxon>
        <taxon>Glycine</taxon>
        <taxon>Glycine subgen. Soja</taxon>
    </lineage>
</organism>
<evidence type="ECO:0000255" key="1">
    <source>
        <dbReference type="PROSITE-ProRule" id="PRU00532"/>
    </source>
</evidence>
<evidence type="ECO:0000269" key="2">
    <source>
    </source>
</evidence>
<evidence type="ECO:0000303" key="3">
    <source>
    </source>
</evidence>
<evidence type="ECO:0000305" key="4"/>
<evidence type="ECO:0000312" key="5">
    <source>
        <dbReference type="EMBL" id="KRH00502.1"/>
    </source>
</evidence>
<gene>
    <name evidence="3" type="primary">TAP1</name>
    <name evidence="5" type="ORF">GLYMA_18G216900</name>
</gene>
<comment type="function">
    <text evidence="2">Acetylates histones H2A and H3 in vitro.</text>
</comment>
<comment type="function">
    <text evidence="2">(Microbial infection) Acts as a negative regulator of immunity when hijacked and relocated to the nucleus by the effector Avh52 from the pathogen Phytophtora sojae (PubMed:30346270). Acts as a susceptibility factor that is hijacked by Avh52 in order to promote acetylation of histones H2A and H3 during early infection by Phytophtora sojae (PubMed:30346270). These epigenetic modifications may up-regulate the expression of potential plant susceptibility genes, thereby promoting susceptibility to Phytophtora sojae (PubMed:30346270).</text>
</comment>
<comment type="catalytic activity">
    <reaction evidence="2">
        <text>L-lysyl-[histone] + acetyl-CoA = N(6)-acetyl-L-lysyl-[histone] + CoA + H(+)</text>
        <dbReference type="Rhea" id="RHEA:21992"/>
        <dbReference type="Rhea" id="RHEA-COMP:9845"/>
        <dbReference type="Rhea" id="RHEA-COMP:11338"/>
        <dbReference type="ChEBI" id="CHEBI:15378"/>
        <dbReference type="ChEBI" id="CHEBI:29969"/>
        <dbReference type="ChEBI" id="CHEBI:57287"/>
        <dbReference type="ChEBI" id="CHEBI:57288"/>
        <dbReference type="ChEBI" id="CHEBI:61930"/>
        <dbReference type="EC" id="2.3.1.48"/>
    </reaction>
</comment>
<comment type="subunit">
    <text evidence="2">Interacts with the effector Avh52 from the pathogen Phytophtora sojae.</text>
</comment>
<comment type="subcellular location">
    <subcellularLocation>
        <location evidence="2">Cytoplasm</location>
    </subcellularLocation>
    <subcellularLocation>
        <location evidence="2">Nucleus</location>
    </subcellularLocation>
    <text evidence="2">Localizes to the cytoplasm, but is relocated to the nucleus when interacting with the effector Avh52 from the pathogen Phytophtora sojae.</text>
</comment>
<comment type="miscellaneous">
    <text evidence="2">Plants silencing TAP1 exhibit decreased susceptibility to the pathogen Phytophtora sojae.</text>
</comment>
<comment type="similarity">
    <text evidence="4">Belongs to the acetyltransferase family.</text>
</comment>